<name>GLO2_PARMW</name>
<sequence>MQSSLHALPVLQDNVLWIWVRGDEAAVVDPAVAEPVIDWLQQRQLQLSAVLQTHHHADHIGGTPGLLERWPDAAVVAAGADRSRIPFQTISVSDGDQVTVLGRSLQVLDVAAHTSAHIAFVIPEQEDPDLGPVVFCGDTLFSGGCGRLFEGTPADMHRALRRLSELPESTKVCCAHEYTEGNLLWAIQQQPQDAAIRQRYDAVVDLRRRGELSLPSSIGEERRSNLFMRAASAEELGRLRRHKDHWRAA</sequence>
<feature type="chain" id="PRO_0000309717" description="Hydroxyacylglutathione hydrolase">
    <location>
        <begin position="1"/>
        <end position="249"/>
    </location>
</feature>
<feature type="binding site" evidence="1">
    <location>
        <position position="54"/>
    </location>
    <ligand>
        <name>Zn(2+)</name>
        <dbReference type="ChEBI" id="CHEBI:29105"/>
        <label>1</label>
    </ligand>
</feature>
<feature type="binding site" evidence="1">
    <location>
        <position position="56"/>
    </location>
    <ligand>
        <name>Zn(2+)</name>
        <dbReference type="ChEBI" id="CHEBI:29105"/>
        <label>1</label>
    </ligand>
</feature>
<feature type="binding site" evidence="1">
    <location>
        <position position="58"/>
    </location>
    <ligand>
        <name>Zn(2+)</name>
        <dbReference type="ChEBI" id="CHEBI:29105"/>
        <label>2</label>
    </ligand>
</feature>
<feature type="binding site" evidence="1">
    <location>
        <position position="59"/>
    </location>
    <ligand>
        <name>Zn(2+)</name>
        <dbReference type="ChEBI" id="CHEBI:29105"/>
        <label>2</label>
    </ligand>
</feature>
<feature type="binding site" evidence="1">
    <location>
        <position position="113"/>
    </location>
    <ligand>
        <name>Zn(2+)</name>
        <dbReference type="ChEBI" id="CHEBI:29105"/>
        <label>1</label>
    </ligand>
</feature>
<feature type="binding site" evidence="1">
    <location>
        <position position="138"/>
    </location>
    <ligand>
        <name>Zn(2+)</name>
        <dbReference type="ChEBI" id="CHEBI:29105"/>
        <label>1</label>
    </ligand>
</feature>
<feature type="binding site" evidence="1">
    <location>
        <position position="138"/>
    </location>
    <ligand>
        <name>Zn(2+)</name>
        <dbReference type="ChEBI" id="CHEBI:29105"/>
        <label>2</label>
    </ligand>
</feature>
<feature type="binding site" evidence="1">
    <location>
        <position position="176"/>
    </location>
    <ligand>
        <name>Zn(2+)</name>
        <dbReference type="ChEBI" id="CHEBI:29105"/>
        <label>2</label>
    </ligand>
</feature>
<keyword id="KW-0378">Hydrolase</keyword>
<keyword id="KW-0479">Metal-binding</keyword>
<keyword id="KW-0862">Zinc</keyword>
<protein>
    <recommendedName>
        <fullName evidence="1">Hydroxyacylglutathione hydrolase</fullName>
        <ecNumber evidence="1">3.1.2.6</ecNumber>
    </recommendedName>
    <alternativeName>
        <fullName evidence="1">Glyoxalase II</fullName>
        <shortName evidence="1">Glx II</shortName>
    </alternativeName>
</protein>
<evidence type="ECO:0000255" key="1">
    <source>
        <dbReference type="HAMAP-Rule" id="MF_01374"/>
    </source>
</evidence>
<gene>
    <name evidence="1" type="primary">gloB</name>
    <name type="ordered locus">SYNW1543</name>
</gene>
<organism>
    <name type="scientific">Parasynechococcus marenigrum (strain WH8102)</name>
    <dbReference type="NCBI Taxonomy" id="84588"/>
    <lineage>
        <taxon>Bacteria</taxon>
        <taxon>Bacillati</taxon>
        <taxon>Cyanobacteriota</taxon>
        <taxon>Cyanophyceae</taxon>
        <taxon>Synechococcales</taxon>
        <taxon>Prochlorococcaceae</taxon>
        <taxon>Parasynechococcus</taxon>
        <taxon>Parasynechococcus marenigrum</taxon>
    </lineage>
</organism>
<dbReference type="EC" id="3.1.2.6" evidence="1"/>
<dbReference type="EMBL" id="BX569693">
    <property type="protein sequence ID" value="CAE08058.1"/>
    <property type="molecule type" value="Genomic_DNA"/>
</dbReference>
<dbReference type="RefSeq" id="WP_011128407.1">
    <property type="nucleotide sequence ID" value="NC_005070.1"/>
</dbReference>
<dbReference type="SMR" id="Q7U5Z8"/>
<dbReference type="STRING" id="84588.SYNW1543"/>
<dbReference type="KEGG" id="syw:SYNW1543"/>
<dbReference type="eggNOG" id="COG0491">
    <property type="taxonomic scope" value="Bacteria"/>
</dbReference>
<dbReference type="HOGENOM" id="CLU_030571_4_1_3"/>
<dbReference type="UniPathway" id="UPA00619">
    <property type="reaction ID" value="UER00676"/>
</dbReference>
<dbReference type="Proteomes" id="UP000001422">
    <property type="component" value="Chromosome"/>
</dbReference>
<dbReference type="GO" id="GO:0004416">
    <property type="term" value="F:hydroxyacylglutathione hydrolase activity"/>
    <property type="evidence" value="ECO:0007669"/>
    <property type="project" value="UniProtKB-UniRule"/>
</dbReference>
<dbReference type="GO" id="GO:0046872">
    <property type="term" value="F:metal ion binding"/>
    <property type="evidence" value="ECO:0007669"/>
    <property type="project" value="UniProtKB-KW"/>
</dbReference>
<dbReference type="GO" id="GO:0019243">
    <property type="term" value="P:methylglyoxal catabolic process to D-lactate via S-lactoyl-glutathione"/>
    <property type="evidence" value="ECO:0007669"/>
    <property type="project" value="InterPro"/>
</dbReference>
<dbReference type="CDD" id="cd07723">
    <property type="entry name" value="hydroxyacylglutathione_hydrolase_MBL-fold"/>
    <property type="match status" value="1"/>
</dbReference>
<dbReference type="Gene3D" id="3.60.15.10">
    <property type="entry name" value="Ribonuclease Z/Hydroxyacylglutathione hydrolase-like"/>
    <property type="match status" value="1"/>
</dbReference>
<dbReference type="HAMAP" id="MF_01374">
    <property type="entry name" value="Glyoxalase_2"/>
    <property type="match status" value="1"/>
</dbReference>
<dbReference type="InterPro" id="IPR035680">
    <property type="entry name" value="Clx_II_MBL"/>
</dbReference>
<dbReference type="InterPro" id="IPR050110">
    <property type="entry name" value="Glyoxalase_II_hydrolase"/>
</dbReference>
<dbReference type="InterPro" id="IPR032282">
    <property type="entry name" value="HAGH_C"/>
</dbReference>
<dbReference type="InterPro" id="IPR017782">
    <property type="entry name" value="Hydroxyacylglutathione_Hdrlase"/>
</dbReference>
<dbReference type="InterPro" id="IPR001279">
    <property type="entry name" value="Metallo-B-lactamas"/>
</dbReference>
<dbReference type="InterPro" id="IPR036866">
    <property type="entry name" value="RibonucZ/Hydroxyglut_hydro"/>
</dbReference>
<dbReference type="NCBIfam" id="TIGR03413">
    <property type="entry name" value="GSH_gloB"/>
    <property type="match status" value="1"/>
</dbReference>
<dbReference type="PANTHER" id="PTHR43705">
    <property type="entry name" value="HYDROXYACYLGLUTATHIONE HYDROLASE"/>
    <property type="match status" value="1"/>
</dbReference>
<dbReference type="PANTHER" id="PTHR43705:SF1">
    <property type="entry name" value="HYDROXYACYLGLUTATHIONE HYDROLASE GLOB"/>
    <property type="match status" value="1"/>
</dbReference>
<dbReference type="Pfam" id="PF16123">
    <property type="entry name" value="HAGH_C"/>
    <property type="match status" value="1"/>
</dbReference>
<dbReference type="Pfam" id="PF00753">
    <property type="entry name" value="Lactamase_B"/>
    <property type="match status" value="1"/>
</dbReference>
<dbReference type="PIRSF" id="PIRSF005457">
    <property type="entry name" value="Glx"/>
    <property type="match status" value="1"/>
</dbReference>
<dbReference type="SMART" id="SM00849">
    <property type="entry name" value="Lactamase_B"/>
    <property type="match status" value="1"/>
</dbReference>
<dbReference type="SUPFAM" id="SSF56281">
    <property type="entry name" value="Metallo-hydrolase/oxidoreductase"/>
    <property type="match status" value="1"/>
</dbReference>
<accession>Q7U5Z8</accession>
<reference key="1">
    <citation type="journal article" date="2003" name="Nature">
        <title>The genome of a motile marine Synechococcus.</title>
        <authorList>
            <person name="Palenik B."/>
            <person name="Brahamsha B."/>
            <person name="Larimer F.W."/>
            <person name="Land M.L."/>
            <person name="Hauser L."/>
            <person name="Chain P."/>
            <person name="Lamerdin J.E."/>
            <person name="Regala W."/>
            <person name="Allen E.E."/>
            <person name="McCarren J."/>
            <person name="Paulsen I.T."/>
            <person name="Dufresne A."/>
            <person name="Partensky F."/>
            <person name="Webb E.A."/>
            <person name="Waterbury J."/>
        </authorList>
    </citation>
    <scope>NUCLEOTIDE SEQUENCE [LARGE SCALE GENOMIC DNA]</scope>
    <source>
        <strain>WH8102</strain>
    </source>
</reference>
<comment type="function">
    <text evidence="1">Thiolesterase that catalyzes the hydrolysis of S-D-lactoyl-glutathione to form glutathione and D-lactic acid.</text>
</comment>
<comment type="catalytic activity">
    <reaction evidence="1">
        <text>an S-(2-hydroxyacyl)glutathione + H2O = a 2-hydroxy carboxylate + glutathione + H(+)</text>
        <dbReference type="Rhea" id="RHEA:21864"/>
        <dbReference type="ChEBI" id="CHEBI:15377"/>
        <dbReference type="ChEBI" id="CHEBI:15378"/>
        <dbReference type="ChEBI" id="CHEBI:57925"/>
        <dbReference type="ChEBI" id="CHEBI:58896"/>
        <dbReference type="ChEBI" id="CHEBI:71261"/>
        <dbReference type="EC" id="3.1.2.6"/>
    </reaction>
</comment>
<comment type="cofactor">
    <cofactor evidence="1">
        <name>Zn(2+)</name>
        <dbReference type="ChEBI" id="CHEBI:29105"/>
    </cofactor>
    <text evidence="1">Binds 2 Zn(2+) ions per subunit.</text>
</comment>
<comment type="pathway">
    <text evidence="1">Secondary metabolite metabolism; methylglyoxal degradation; (R)-lactate from methylglyoxal: step 2/2.</text>
</comment>
<comment type="subunit">
    <text evidence="1">Monomer.</text>
</comment>
<comment type="similarity">
    <text evidence="1">Belongs to the metallo-beta-lactamase superfamily. Glyoxalase II family.</text>
</comment>
<proteinExistence type="inferred from homology"/>